<sequence>MFAGLPSLTHEQQQKAVERIQELMAQGMSSGQAIALVAEELRANHSGERIVARFEDEDE</sequence>
<protein>
    <recommendedName>
        <fullName evidence="1">UPF0181 protein YoaH</fullName>
    </recommendedName>
</protein>
<accession>B5YQV2</accession>
<comment type="similarity">
    <text evidence="1">Belongs to the UPF0181 family.</text>
</comment>
<organism>
    <name type="scientific">Escherichia coli O157:H7 (strain EC4115 / EHEC)</name>
    <dbReference type="NCBI Taxonomy" id="444450"/>
    <lineage>
        <taxon>Bacteria</taxon>
        <taxon>Pseudomonadati</taxon>
        <taxon>Pseudomonadota</taxon>
        <taxon>Gammaproteobacteria</taxon>
        <taxon>Enterobacterales</taxon>
        <taxon>Enterobacteriaceae</taxon>
        <taxon>Escherichia</taxon>
    </lineage>
</organism>
<proteinExistence type="inferred from homology"/>
<reference key="1">
    <citation type="journal article" date="2011" name="Proc. Natl. Acad. Sci. U.S.A.">
        <title>Genomic anatomy of Escherichia coli O157:H7 outbreaks.</title>
        <authorList>
            <person name="Eppinger M."/>
            <person name="Mammel M.K."/>
            <person name="Leclerc J.E."/>
            <person name="Ravel J."/>
            <person name="Cebula T.A."/>
        </authorList>
    </citation>
    <scope>NUCLEOTIDE SEQUENCE [LARGE SCALE GENOMIC DNA]</scope>
    <source>
        <strain>EC4115 / EHEC</strain>
    </source>
</reference>
<dbReference type="EMBL" id="CP001164">
    <property type="protein sequence ID" value="ACI36004.1"/>
    <property type="molecule type" value="Genomic_DNA"/>
</dbReference>
<dbReference type="RefSeq" id="WP_000457334.1">
    <property type="nucleotide sequence ID" value="NC_011353.1"/>
</dbReference>
<dbReference type="SMR" id="B5YQV2"/>
<dbReference type="KEGG" id="ecf:ECH74115_2540"/>
<dbReference type="HOGENOM" id="CLU_185263_0_0_6"/>
<dbReference type="HAMAP" id="MF_00507">
    <property type="entry name" value="UPF0181"/>
    <property type="match status" value="1"/>
</dbReference>
<dbReference type="InterPro" id="IPR005371">
    <property type="entry name" value="UPF0181"/>
</dbReference>
<dbReference type="NCBIfam" id="NF003476">
    <property type="entry name" value="PRK05114.1"/>
    <property type="match status" value="1"/>
</dbReference>
<dbReference type="Pfam" id="PF03701">
    <property type="entry name" value="UPF0181"/>
    <property type="match status" value="1"/>
</dbReference>
<name>YOAH_ECO5E</name>
<evidence type="ECO:0000255" key="1">
    <source>
        <dbReference type="HAMAP-Rule" id="MF_00507"/>
    </source>
</evidence>
<feature type="chain" id="PRO_1000127042" description="UPF0181 protein YoaH">
    <location>
        <begin position="1"/>
        <end position="59"/>
    </location>
</feature>
<gene>
    <name evidence="1" type="primary">yoaH</name>
    <name type="ordered locus">ECH74115_2540</name>
</gene>